<protein>
    <recommendedName>
        <fullName evidence="1">NADH-quinone oxidoreductase subunit H</fullName>
        <ecNumber evidence="1">7.1.1.-</ecNumber>
    </recommendedName>
    <alternativeName>
        <fullName evidence="1">NADH dehydrogenase I subunit H</fullName>
    </alternativeName>
    <alternativeName>
        <fullName evidence="1">NDH-1 subunit H</fullName>
    </alternativeName>
</protein>
<name>NUOH_ECOSM</name>
<gene>
    <name evidence="1" type="primary">nuoH</name>
    <name type="ordered locus">EcSMS35_2436</name>
</gene>
<evidence type="ECO:0000255" key="1">
    <source>
        <dbReference type="HAMAP-Rule" id="MF_01350"/>
    </source>
</evidence>
<dbReference type="EC" id="7.1.1.-" evidence="1"/>
<dbReference type="EMBL" id="CP000970">
    <property type="protein sequence ID" value="ACB17690.1"/>
    <property type="molecule type" value="Genomic_DNA"/>
</dbReference>
<dbReference type="RefSeq" id="WP_000118507.1">
    <property type="nucleotide sequence ID" value="NC_010498.1"/>
</dbReference>
<dbReference type="SMR" id="B1LLN5"/>
<dbReference type="GeneID" id="93774892"/>
<dbReference type="KEGG" id="ecm:EcSMS35_2436"/>
<dbReference type="HOGENOM" id="CLU_015134_0_1_6"/>
<dbReference type="Proteomes" id="UP000007011">
    <property type="component" value="Chromosome"/>
</dbReference>
<dbReference type="GO" id="GO:0005886">
    <property type="term" value="C:plasma membrane"/>
    <property type="evidence" value="ECO:0007669"/>
    <property type="project" value="UniProtKB-SubCell"/>
</dbReference>
<dbReference type="GO" id="GO:0003954">
    <property type="term" value="F:NADH dehydrogenase activity"/>
    <property type="evidence" value="ECO:0007669"/>
    <property type="project" value="TreeGrafter"/>
</dbReference>
<dbReference type="GO" id="GO:0016655">
    <property type="term" value="F:oxidoreductase activity, acting on NAD(P)H, quinone or similar compound as acceptor"/>
    <property type="evidence" value="ECO:0007669"/>
    <property type="project" value="UniProtKB-UniRule"/>
</dbReference>
<dbReference type="GO" id="GO:0048038">
    <property type="term" value="F:quinone binding"/>
    <property type="evidence" value="ECO:0007669"/>
    <property type="project" value="UniProtKB-KW"/>
</dbReference>
<dbReference type="GO" id="GO:0009060">
    <property type="term" value="P:aerobic respiration"/>
    <property type="evidence" value="ECO:0007669"/>
    <property type="project" value="TreeGrafter"/>
</dbReference>
<dbReference type="HAMAP" id="MF_01350">
    <property type="entry name" value="NDH1_NuoH"/>
    <property type="match status" value="1"/>
</dbReference>
<dbReference type="InterPro" id="IPR001694">
    <property type="entry name" value="NADH_UbQ_OxRdtase_su1/FPO"/>
</dbReference>
<dbReference type="InterPro" id="IPR018086">
    <property type="entry name" value="NADH_UbQ_OxRdtase_su1_CS"/>
</dbReference>
<dbReference type="NCBIfam" id="NF004740">
    <property type="entry name" value="PRK06076.1-1"/>
    <property type="match status" value="1"/>
</dbReference>
<dbReference type="NCBIfam" id="NF004741">
    <property type="entry name" value="PRK06076.1-2"/>
    <property type="match status" value="1"/>
</dbReference>
<dbReference type="PANTHER" id="PTHR11432">
    <property type="entry name" value="NADH DEHYDROGENASE SUBUNIT 1"/>
    <property type="match status" value="1"/>
</dbReference>
<dbReference type="PANTHER" id="PTHR11432:SF3">
    <property type="entry name" value="NADH-UBIQUINONE OXIDOREDUCTASE CHAIN 1"/>
    <property type="match status" value="1"/>
</dbReference>
<dbReference type="Pfam" id="PF00146">
    <property type="entry name" value="NADHdh"/>
    <property type="match status" value="1"/>
</dbReference>
<dbReference type="PROSITE" id="PS00667">
    <property type="entry name" value="COMPLEX1_ND1_1"/>
    <property type="match status" value="1"/>
</dbReference>
<dbReference type="PROSITE" id="PS00668">
    <property type="entry name" value="COMPLEX1_ND1_2"/>
    <property type="match status" value="1"/>
</dbReference>
<feature type="chain" id="PRO_1000143597" description="NADH-quinone oxidoreductase subunit H">
    <location>
        <begin position="1"/>
        <end position="325"/>
    </location>
</feature>
<feature type="transmembrane region" description="Helical" evidence="1">
    <location>
        <begin position="11"/>
        <end position="31"/>
    </location>
</feature>
<feature type="transmembrane region" description="Helical" evidence="1">
    <location>
        <begin position="81"/>
        <end position="101"/>
    </location>
</feature>
<feature type="transmembrane region" description="Helical" evidence="1">
    <location>
        <begin position="114"/>
        <end position="134"/>
    </location>
</feature>
<feature type="transmembrane region" description="Helical" evidence="1">
    <location>
        <begin position="154"/>
        <end position="174"/>
    </location>
</feature>
<feature type="transmembrane region" description="Helical" evidence="1">
    <location>
        <begin position="186"/>
        <end position="206"/>
    </location>
</feature>
<feature type="transmembrane region" description="Helical" evidence="1">
    <location>
        <begin position="237"/>
        <end position="257"/>
    </location>
</feature>
<feature type="transmembrane region" description="Helical" evidence="1">
    <location>
        <begin position="265"/>
        <end position="285"/>
    </location>
</feature>
<feature type="transmembrane region" description="Helical" evidence="1">
    <location>
        <begin position="304"/>
        <end position="324"/>
    </location>
</feature>
<keyword id="KW-0997">Cell inner membrane</keyword>
<keyword id="KW-1003">Cell membrane</keyword>
<keyword id="KW-0472">Membrane</keyword>
<keyword id="KW-0520">NAD</keyword>
<keyword id="KW-0874">Quinone</keyword>
<keyword id="KW-1278">Translocase</keyword>
<keyword id="KW-0812">Transmembrane</keyword>
<keyword id="KW-1133">Transmembrane helix</keyword>
<keyword id="KW-0830">Ubiquinone</keyword>
<organism>
    <name type="scientific">Escherichia coli (strain SMS-3-5 / SECEC)</name>
    <dbReference type="NCBI Taxonomy" id="439855"/>
    <lineage>
        <taxon>Bacteria</taxon>
        <taxon>Pseudomonadati</taxon>
        <taxon>Pseudomonadota</taxon>
        <taxon>Gammaproteobacteria</taxon>
        <taxon>Enterobacterales</taxon>
        <taxon>Enterobacteriaceae</taxon>
        <taxon>Escherichia</taxon>
    </lineage>
</organism>
<reference key="1">
    <citation type="journal article" date="2008" name="J. Bacteriol.">
        <title>Insights into the environmental resistance gene pool from the genome sequence of the multidrug-resistant environmental isolate Escherichia coli SMS-3-5.</title>
        <authorList>
            <person name="Fricke W.F."/>
            <person name="Wright M.S."/>
            <person name="Lindell A.H."/>
            <person name="Harkins D.M."/>
            <person name="Baker-Austin C."/>
            <person name="Ravel J."/>
            <person name="Stepanauskas R."/>
        </authorList>
    </citation>
    <scope>NUCLEOTIDE SEQUENCE [LARGE SCALE GENOMIC DNA]</scope>
    <source>
        <strain>SMS-3-5 / SECEC</strain>
    </source>
</reference>
<accession>B1LLN5</accession>
<comment type="function">
    <text evidence="1">NDH-1 shuttles electrons from NADH, via FMN and iron-sulfur (Fe-S) centers, to quinones in the respiratory chain. The immediate electron acceptor for the enzyme in this species is believed to be ubiquinone. Couples the redox reaction to proton translocation (for every two electrons transferred, four hydrogen ions are translocated across the cytoplasmic membrane), and thus conserves the redox energy in a proton gradient. This subunit may bind ubiquinone.</text>
</comment>
<comment type="catalytic activity">
    <reaction evidence="1">
        <text>a quinone + NADH + 5 H(+)(in) = a quinol + NAD(+) + 4 H(+)(out)</text>
        <dbReference type="Rhea" id="RHEA:57888"/>
        <dbReference type="ChEBI" id="CHEBI:15378"/>
        <dbReference type="ChEBI" id="CHEBI:24646"/>
        <dbReference type="ChEBI" id="CHEBI:57540"/>
        <dbReference type="ChEBI" id="CHEBI:57945"/>
        <dbReference type="ChEBI" id="CHEBI:132124"/>
    </reaction>
</comment>
<comment type="subunit">
    <text evidence="1">NDH-1 is composed of 13 different subunits. Subunits NuoA, H, J, K, L, M, N constitute the membrane sector of the complex.</text>
</comment>
<comment type="subcellular location">
    <subcellularLocation>
        <location evidence="1">Cell inner membrane</location>
        <topology evidence="1">Multi-pass membrane protein</topology>
    </subcellularLocation>
</comment>
<comment type="similarity">
    <text evidence="1">Belongs to the complex I subunit 1 family.</text>
</comment>
<sequence length="325" mass="36219">MSWISPELIEILLTILKAVVILLVVVTCGAFMSFGERRLLGLFQNRYGPNRVGWGGSLQLVADMIKMFFKEDWIPKFSDRVIFTLAPMIAFTSLLLAFAIVPVSPGWVVADLNIGILFFLMMAGLAVYAVLFAGWSSNNKYSLLGAMRASAQTLSYEVFLGLSLMGVVAQAGSFNMTDIVNSQAHVWNVIPQFFGFITFAIAGVAVCHRHPFDQPEAEQELADGYHIEYSGMKFGLFFVGEYIGIVTISALMVTLFFGGWQGPLLPPFIWFALKTAFFMMMFILIRASLPRPRYDQVMSFGWKICLPLTLINLLVTAAVILWQAQ</sequence>
<proteinExistence type="inferred from homology"/>